<protein>
    <recommendedName>
        <fullName evidence="1">Ribulose bisphosphate carboxylase large chain</fullName>
        <shortName evidence="1">RuBisCO large subunit</shortName>
        <ecNumber evidence="1">4.1.1.39</ecNumber>
    </recommendedName>
</protein>
<reference key="1">
    <citation type="submission" date="2007-11" db="EMBL/GenBank/DDBJ databases">
        <title>The complete chloroplast genome of Acorus americanus.</title>
        <authorList>
            <person name="Peery R.M."/>
            <person name="Chumley T.W."/>
            <person name="Kuehl J.V."/>
            <person name="Boore J.L."/>
            <person name="Raubeson L.A."/>
        </authorList>
    </citation>
    <scope>NUCLEOTIDE SEQUENCE [LARGE SCALE GENOMIC DNA]</scope>
</reference>
<comment type="function">
    <text evidence="1">RuBisCO catalyzes two reactions: the carboxylation of D-ribulose 1,5-bisphosphate, the primary event in carbon dioxide fixation, as well as the oxidative fragmentation of the pentose substrate in the photorespiration process. Both reactions occur simultaneously and in competition at the same active site.</text>
</comment>
<comment type="catalytic activity">
    <reaction evidence="1">
        <text>2 (2R)-3-phosphoglycerate + 2 H(+) = D-ribulose 1,5-bisphosphate + CO2 + H2O</text>
        <dbReference type="Rhea" id="RHEA:23124"/>
        <dbReference type="ChEBI" id="CHEBI:15377"/>
        <dbReference type="ChEBI" id="CHEBI:15378"/>
        <dbReference type="ChEBI" id="CHEBI:16526"/>
        <dbReference type="ChEBI" id="CHEBI:57870"/>
        <dbReference type="ChEBI" id="CHEBI:58272"/>
        <dbReference type="EC" id="4.1.1.39"/>
    </reaction>
</comment>
<comment type="catalytic activity">
    <reaction evidence="1">
        <text>D-ribulose 1,5-bisphosphate + O2 = 2-phosphoglycolate + (2R)-3-phosphoglycerate + 2 H(+)</text>
        <dbReference type="Rhea" id="RHEA:36631"/>
        <dbReference type="ChEBI" id="CHEBI:15378"/>
        <dbReference type="ChEBI" id="CHEBI:15379"/>
        <dbReference type="ChEBI" id="CHEBI:57870"/>
        <dbReference type="ChEBI" id="CHEBI:58033"/>
        <dbReference type="ChEBI" id="CHEBI:58272"/>
    </reaction>
</comment>
<comment type="cofactor">
    <cofactor evidence="1">
        <name>Mg(2+)</name>
        <dbReference type="ChEBI" id="CHEBI:18420"/>
    </cofactor>
    <text evidence="1">Binds 1 Mg(2+) ion per subunit.</text>
</comment>
<comment type="subunit">
    <text evidence="1">Heterohexadecamer of 8 large chains and 8 small chains; disulfide-linked. The disulfide link is formed within the large subunit homodimers.</text>
</comment>
<comment type="subcellular location">
    <subcellularLocation>
        <location>Plastid</location>
        <location>Chloroplast</location>
    </subcellularLocation>
</comment>
<comment type="PTM">
    <text evidence="1">The disulfide bond which can form in the large chain dimeric partners within the hexadecamer appears to be associated with oxidative stress and protein turnover.</text>
</comment>
<comment type="miscellaneous">
    <text evidence="1">The basic functional RuBisCO is composed of a large chain homodimer in a 'head-to-tail' conformation. In form I RuBisCO this homodimer is arranged in a barrel-like tetramer with the small subunits forming a tetrameric 'cap' on each end of the 'barrel'.</text>
</comment>
<comment type="similarity">
    <text evidence="1">Belongs to the RuBisCO large chain family. Type I subfamily.</text>
</comment>
<proteinExistence type="inferred from homology"/>
<name>RBL_ACOCI</name>
<sequence>MSPQTETKAGVGFKAGVKDYKLTYYTPEYETKDTDILAAFRVTPQPGVPPEEAGAAVAAESSTGTWTTVWTDGLTSLDRYKGRCYHIEPVVGEQNQYIAYVAYPLDLFEEGSVTNMFTSIVGNVFGFKALRALRLEDLRIPPAYSKTFQGPPHGIQVERDKLNKYGRPLLGCTIKPKLGLSAKNYGRAVYECLRGGLDFTKDDENVNSQPFMRWRDRFLFCAEAIYKAQAETGEIKGHYLNATAGTCEEMMRRAQCARELGVPIVMHDYLTGGFTANTSLAIYCRNNGLLLHIHRAMHAVIDRQKNHGMHFRVLAKALRMSGGDHIHAGTVVGKLEGEREMTLGFVDLLRDDYIEKDRSRGIFFTQDWVSMPGVLPVASGGIHVWHMPALTEIFGDDSVLQFGGGTLGHPWGNAPGAVANRVALEACVQARNEGRDLARESTQIIREACKWSPELAAACEVWKEIKFEFEPVDKLDVKKN</sequence>
<feature type="propeptide" id="PRO_0000355754" evidence="1">
    <location>
        <begin position="1"/>
        <end position="2"/>
    </location>
</feature>
<feature type="chain" id="PRO_0000355755" description="Ribulose bisphosphate carboxylase large chain">
    <location>
        <begin position="3"/>
        <end position="480"/>
    </location>
</feature>
<feature type="active site" description="Proton acceptor" evidence="1">
    <location>
        <position position="175"/>
    </location>
</feature>
<feature type="active site" description="Proton acceptor" evidence="1">
    <location>
        <position position="294"/>
    </location>
</feature>
<feature type="binding site" description="in homodimeric partner" evidence="1">
    <location>
        <position position="123"/>
    </location>
    <ligand>
        <name>substrate</name>
    </ligand>
</feature>
<feature type="binding site" evidence="1">
    <location>
        <position position="173"/>
    </location>
    <ligand>
        <name>substrate</name>
    </ligand>
</feature>
<feature type="binding site" evidence="1">
    <location>
        <position position="177"/>
    </location>
    <ligand>
        <name>substrate</name>
    </ligand>
</feature>
<feature type="binding site" description="via carbamate group" evidence="1">
    <location>
        <position position="201"/>
    </location>
    <ligand>
        <name>Mg(2+)</name>
        <dbReference type="ChEBI" id="CHEBI:18420"/>
    </ligand>
</feature>
<feature type="binding site" evidence="1">
    <location>
        <position position="203"/>
    </location>
    <ligand>
        <name>Mg(2+)</name>
        <dbReference type="ChEBI" id="CHEBI:18420"/>
    </ligand>
</feature>
<feature type="binding site" evidence="1">
    <location>
        <position position="204"/>
    </location>
    <ligand>
        <name>Mg(2+)</name>
        <dbReference type="ChEBI" id="CHEBI:18420"/>
    </ligand>
</feature>
<feature type="binding site" evidence="1">
    <location>
        <position position="295"/>
    </location>
    <ligand>
        <name>substrate</name>
    </ligand>
</feature>
<feature type="binding site" evidence="1">
    <location>
        <position position="327"/>
    </location>
    <ligand>
        <name>substrate</name>
    </ligand>
</feature>
<feature type="binding site" evidence="1">
    <location>
        <position position="379"/>
    </location>
    <ligand>
        <name>substrate</name>
    </ligand>
</feature>
<feature type="site" description="Transition state stabilizer" evidence="1">
    <location>
        <position position="334"/>
    </location>
</feature>
<feature type="modified residue" description="N-acetylproline" evidence="1">
    <location>
        <position position="3"/>
    </location>
</feature>
<feature type="modified residue" description="N6,N6,N6-trimethyllysine" evidence="1">
    <location>
        <position position="14"/>
    </location>
</feature>
<feature type="modified residue" description="N6-carboxylysine" evidence="1">
    <location>
        <position position="201"/>
    </location>
</feature>
<feature type="disulfide bond" description="Interchain; in linked form" evidence="1">
    <location>
        <position position="247"/>
    </location>
</feature>
<evidence type="ECO:0000255" key="1">
    <source>
        <dbReference type="HAMAP-Rule" id="MF_01338"/>
    </source>
</evidence>
<accession>A9LYA9</accession>
<organism>
    <name type="scientific">Acorus calamus var. americanus</name>
    <name type="common">American sweet flag</name>
    <name type="synonym">Acorus americanus</name>
    <dbReference type="NCBI Taxonomy" id="263995"/>
    <lineage>
        <taxon>Eukaryota</taxon>
        <taxon>Viridiplantae</taxon>
        <taxon>Streptophyta</taxon>
        <taxon>Embryophyta</taxon>
        <taxon>Tracheophyta</taxon>
        <taxon>Spermatophyta</taxon>
        <taxon>Magnoliopsida</taxon>
        <taxon>Liliopsida</taxon>
        <taxon>Acoraceae</taxon>
        <taxon>Acorus</taxon>
    </lineage>
</organism>
<geneLocation type="chloroplast"/>
<keyword id="KW-0007">Acetylation</keyword>
<keyword id="KW-0113">Calvin cycle</keyword>
<keyword id="KW-0120">Carbon dioxide fixation</keyword>
<keyword id="KW-0150">Chloroplast</keyword>
<keyword id="KW-1015">Disulfide bond</keyword>
<keyword id="KW-0456">Lyase</keyword>
<keyword id="KW-0460">Magnesium</keyword>
<keyword id="KW-0479">Metal-binding</keyword>
<keyword id="KW-0488">Methylation</keyword>
<keyword id="KW-0503">Monooxygenase</keyword>
<keyword id="KW-0560">Oxidoreductase</keyword>
<keyword id="KW-0601">Photorespiration</keyword>
<keyword id="KW-0602">Photosynthesis</keyword>
<keyword id="KW-0934">Plastid</keyword>
<gene>
    <name evidence="1" type="primary">rbcL</name>
</gene>
<dbReference type="EC" id="4.1.1.39" evidence="1"/>
<dbReference type="EMBL" id="EU273602">
    <property type="protein sequence ID" value="ABX38752.1"/>
    <property type="molecule type" value="Genomic_DNA"/>
</dbReference>
<dbReference type="RefSeq" id="YP_001586190.1">
    <property type="nucleotide sequence ID" value="NC_010093.1"/>
</dbReference>
<dbReference type="SMR" id="A9LYA9"/>
<dbReference type="GeneID" id="5777804"/>
<dbReference type="GO" id="GO:0009507">
    <property type="term" value="C:chloroplast"/>
    <property type="evidence" value="ECO:0007669"/>
    <property type="project" value="UniProtKB-SubCell"/>
</dbReference>
<dbReference type="GO" id="GO:0000287">
    <property type="term" value="F:magnesium ion binding"/>
    <property type="evidence" value="ECO:0007669"/>
    <property type="project" value="UniProtKB-UniRule"/>
</dbReference>
<dbReference type="GO" id="GO:0004497">
    <property type="term" value="F:monooxygenase activity"/>
    <property type="evidence" value="ECO:0007669"/>
    <property type="project" value="UniProtKB-KW"/>
</dbReference>
<dbReference type="GO" id="GO:0016984">
    <property type="term" value="F:ribulose-bisphosphate carboxylase activity"/>
    <property type="evidence" value="ECO:0007669"/>
    <property type="project" value="UniProtKB-UniRule"/>
</dbReference>
<dbReference type="GO" id="GO:0009853">
    <property type="term" value="P:photorespiration"/>
    <property type="evidence" value="ECO:0007669"/>
    <property type="project" value="UniProtKB-KW"/>
</dbReference>
<dbReference type="GO" id="GO:0019253">
    <property type="term" value="P:reductive pentose-phosphate cycle"/>
    <property type="evidence" value="ECO:0007669"/>
    <property type="project" value="UniProtKB-UniRule"/>
</dbReference>
<dbReference type="CDD" id="cd08212">
    <property type="entry name" value="RuBisCO_large_I"/>
    <property type="match status" value="1"/>
</dbReference>
<dbReference type="FunFam" id="3.20.20.110:FF:000001">
    <property type="entry name" value="Ribulose bisphosphate carboxylase large chain"/>
    <property type="match status" value="1"/>
</dbReference>
<dbReference type="FunFam" id="3.30.70.150:FF:000001">
    <property type="entry name" value="Ribulose bisphosphate carboxylase large chain"/>
    <property type="match status" value="1"/>
</dbReference>
<dbReference type="Gene3D" id="3.20.20.110">
    <property type="entry name" value="Ribulose bisphosphate carboxylase, large subunit, C-terminal domain"/>
    <property type="match status" value="1"/>
</dbReference>
<dbReference type="Gene3D" id="3.30.70.150">
    <property type="entry name" value="RuBisCO large subunit, N-terminal domain"/>
    <property type="match status" value="1"/>
</dbReference>
<dbReference type="HAMAP" id="MF_01338">
    <property type="entry name" value="RuBisCO_L_type1"/>
    <property type="match status" value="1"/>
</dbReference>
<dbReference type="InterPro" id="IPR033966">
    <property type="entry name" value="RuBisCO"/>
</dbReference>
<dbReference type="InterPro" id="IPR020878">
    <property type="entry name" value="RuBisCo_large_chain_AS"/>
</dbReference>
<dbReference type="InterPro" id="IPR000685">
    <property type="entry name" value="RuBisCO_lsu_C"/>
</dbReference>
<dbReference type="InterPro" id="IPR036376">
    <property type="entry name" value="RuBisCO_lsu_C_sf"/>
</dbReference>
<dbReference type="InterPro" id="IPR017443">
    <property type="entry name" value="RuBisCO_lsu_fd_N"/>
</dbReference>
<dbReference type="InterPro" id="IPR036422">
    <property type="entry name" value="RuBisCO_lsu_N_sf"/>
</dbReference>
<dbReference type="InterPro" id="IPR020888">
    <property type="entry name" value="RuBisCO_lsuI"/>
</dbReference>
<dbReference type="NCBIfam" id="NF003252">
    <property type="entry name" value="PRK04208.1"/>
    <property type="match status" value="1"/>
</dbReference>
<dbReference type="PANTHER" id="PTHR42704">
    <property type="entry name" value="RIBULOSE BISPHOSPHATE CARBOXYLASE"/>
    <property type="match status" value="1"/>
</dbReference>
<dbReference type="PANTHER" id="PTHR42704:SF15">
    <property type="entry name" value="RIBULOSE BISPHOSPHATE CARBOXYLASE LARGE CHAIN"/>
    <property type="match status" value="1"/>
</dbReference>
<dbReference type="Pfam" id="PF00016">
    <property type="entry name" value="RuBisCO_large"/>
    <property type="match status" value="1"/>
</dbReference>
<dbReference type="Pfam" id="PF02788">
    <property type="entry name" value="RuBisCO_large_N"/>
    <property type="match status" value="1"/>
</dbReference>
<dbReference type="SFLD" id="SFLDG01052">
    <property type="entry name" value="RuBisCO"/>
    <property type="match status" value="1"/>
</dbReference>
<dbReference type="SFLD" id="SFLDS00014">
    <property type="entry name" value="RuBisCO"/>
    <property type="match status" value="1"/>
</dbReference>
<dbReference type="SFLD" id="SFLDG00301">
    <property type="entry name" value="RuBisCO-like_proteins"/>
    <property type="match status" value="1"/>
</dbReference>
<dbReference type="SUPFAM" id="SSF51649">
    <property type="entry name" value="RuBisCo, C-terminal domain"/>
    <property type="match status" value="1"/>
</dbReference>
<dbReference type="SUPFAM" id="SSF54966">
    <property type="entry name" value="RuBisCO, large subunit, small (N-terminal) domain"/>
    <property type="match status" value="1"/>
</dbReference>
<dbReference type="PROSITE" id="PS00157">
    <property type="entry name" value="RUBISCO_LARGE"/>
    <property type="match status" value="1"/>
</dbReference>